<protein>
    <recommendedName>
        <fullName evidence="1">Hydroxyethylthiazole kinase</fullName>
        <ecNumber evidence="1">2.7.1.50</ecNumber>
    </recommendedName>
    <alternativeName>
        <fullName evidence="1">4-methyl-5-beta-hydroxyethylthiazole kinase</fullName>
        <shortName evidence="1">TH kinase</shortName>
        <shortName evidence="1">Thz kinase</shortName>
    </alternativeName>
</protein>
<feature type="chain" id="PRO_0000156970" description="Hydroxyethylthiazole kinase">
    <location>
        <begin position="1"/>
        <end position="265"/>
    </location>
</feature>
<feature type="binding site" evidence="1">
    <location>
        <position position="43"/>
    </location>
    <ligand>
        <name>substrate</name>
    </ligand>
</feature>
<feature type="binding site" evidence="1">
    <location>
        <position position="118"/>
    </location>
    <ligand>
        <name>ATP</name>
        <dbReference type="ChEBI" id="CHEBI:30616"/>
    </ligand>
</feature>
<feature type="binding site" evidence="1">
    <location>
        <position position="165"/>
    </location>
    <ligand>
        <name>ATP</name>
        <dbReference type="ChEBI" id="CHEBI:30616"/>
    </ligand>
</feature>
<feature type="binding site" evidence="1">
    <location>
        <position position="192"/>
    </location>
    <ligand>
        <name>substrate</name>
    </ligand>
</feature>
<keyword id="KW-0067">ATP-binding</keyword>
<keyword id="KW-0418">Kinase</keyword>
<keyword id="KW-0460">Magnesium</keyword>
<keyword id="KW-0479">Metal-binding</keyword>
<keyword id="KW-0547">Nucleotide-binding</keyword>
<keyword id="KW-0784">Thiamine biosynthesis</keyword>
<keyword id="KW-0808">Transferase</keyword>
<sequence length="265" mass="28705">MNFIVEALNEVRKRKPLVHNITNFVVMNTTANALLALGASPVMAHAEEELEEMIGLADAVVINIGTLDSWWRKSMIKAVEIANEMKKPIVLDPVGAGATKLRTKVALEILDRGVTVLKGNFGEISSLLGEFGKTRGVDSSEYDEEKAKVLALSAAKEFNTTVAVTGAVDYVSDGGKVFAIYNGHKLLERVTGTGCIVTAITGAFVAVTEPLRAAISSLVVFGIAAEKAYEEAKYPGSFHVKLYDWLYRIDGEVIRKYAKVREVGV</sequence>
<comment type="function">
    <text evidence="1">Catalyzes the phosphorylation of the hydroxyl group of 4-methyl-5-beta-hydroxyethylthiazole (THZ).</text>
</comment>
<comment type="catalytic activity">
    <reaction evidence="1">
        <text>5-(2-hydroxyethyl)-4-methylthiazole + ATP = 4-methyl-5-(2-phosphooxyethyl)-thiazole + ADP + H(+)</text>
        <dbReference type="Rhea" id="RHEA:24212"/>
        <dbReference type="ChEBI" id="CHEBI:15378"/>
        <dbReference type="ChEBI" id="CHEBI:17957"/>
        <dbReference type="ChEBI" id="CHEBI:30616"/>
        <dbReference type="ChEBI" id="CHEBI:58296"/>
        <dbReference type="ChEBI" id="CHEBI:456216"/>
        <dbReference type="EC" id="2.7.1.50"/>
    </reaction>
</comment>
<comment type="cofactor">
    <cofactor evidence="1">
        <name>Mg(2+)</name>
        <dbReference type="ChEBI" id="CHEBI:18420"/>
    </cofactor>
</comment>
<comment type="pathway">
    <text evidence="1">Cofactor biosynthesis; thiamine diphosphate biosynthesis; 4-methyl-5-(2-phosphoethyl)-thiazole from 5-(2-hydroxyethyl)-4-methylthiazole: step 1/1.</text>
</comment>
<comment type="similarity">
    <text evidence="1">Belongs to the Thz kinase family.</text>
</comment>
<comment type="sequence caution" evidence="2">
    <conflict type="erroneous initiation">
        <sequence resource="EMBL-CDS" id="CAB50002"/>
    </conflict>
    <text>Extended N-terminus.</text>
</comment>
<accession>Q9UZQ4</accession>
<accession>G8ZJP5</accession>
<dbReference type="EC" id="2.7.1.50" evidence="1"/>
<dbReference type="EMBL" id="AJ248286">
    <property type="protein sequence ID" value="CAB50002.1"/>
    <property type="status" value="ALT_INIT"/>
    <property type="molecule type" value="Genomic_DNA"/>
</dbReference>
<dbReference type="EMBL" id="HE613800">
    <property type="protein sequence ID" value="CCE70504.1"/>
    <property type="molecule type" value="Genomic_DNA"/>
</dbReference>
<dbReference type="PIR" id="E75087">
    <property type="entry name" value="E75087"/>
</dbReference>
<dbReference type="RefSeq" id="WP_048146833.1">
    <property type="nucleotide sequence ID" value="NC_000868.1"/>
</dbReference>
<dbReference type="SMR" id="Q9UZQ4"/>
<dbReference type="STRING" id="272844.PAB2432"/>
<dbReference type="KEGG" id="pab:PAB2432"/>
<dbReference type="PATRIC" id="fig|272844.11.peg.1147"/>
<dbReference type="eggNOG" id="arCOG00019">
    <property type="taxonomic scope" value="Archaea"/>
</dbReference>
<dbReference type="HOGENOM" id="CLU_019943_0_1_2"/>
<dbReference type="OrthoDB" id="214286at2157"/>
<dbReference type="UniPathway" id="UPA00060">
    <property type="reaction ID" value="UER00139"/>
</dbReference>
<dbReference type="Proteomes" id="UP000000810">
    <property type="component" value="Chromosome"/>
</dbReference>
<dbReference type="Proteomes" id="UP000009139">
    <property type="component" value="Chromosome"/>
</dbReference>
<dbReference type="GO" id="GO:0005524">
    <property type="term" value="F:ATP binding"/>
    <property type="evidence" value="ECO:0007669"/>
    <property type="project" value="UniProtKB-UniRule"/>
</dbReference>
<dbReference type="GO" id="GO:0004417">
    <property type="term" value="F:hydroxyethylthiazole kinase activity"/>
    <property type="evidence" value="ECO:0007669"/>
    <property type="project" value="UniProtKB-UniRule"/>
</dbReference>
<dbReference type="GO" id="GO:0000287">
    <property type="term" value="F:magnesium ion binding"/>
    <property type="evidence" value="ECO:0007669"/>
    <property type="project" value="UniProtKB-UniRule"/>
</dbReference>
<dbReference type="GO" id="GO:0009228">
    <property type="term" value="P:thiamine biosynthetic process"/>
    <property type="evidence" value="ECO:0007669"/>
    <property type="project" value="UniProtKB-KW"/>
</dbReference>
<dbReference type="GO" id="GO:0009229">
    <property type="term" value="P:thiamine diphosphate biosynthetic process"/>
    <property type="evidence" value="ECO:0007669"/>
    <property type="project" value="UniProtKB-UniRule"/>
</dbReference>
<dbReference type="CDD" id="cd01170">
    <property type="entry name" value="THZ_kinase"/>
    <property type="match status" value="1"/>
</dbReference>
<dbReference type="Gene3D" id="3.40.1190.20">
    <property type="match status" value="1"/>
</dbReference>
<dbReference type="HAMAP" id="MF_00228">
    <property type="entry name" value="Thz_kinase"/>
    <property type="match status" value="1"/>
</dbReference>
<dbReference type="InterPro" id="IPR000417">
    <property type="entry name" value="Hyethyz_kinase"/>
</dbReference>
<dbReference type="InterPro" id="IPR029056">
    <property type="entry name" value="Ribokinase-like"/>
</dbReference>
<dbReference type="NCBIfam" id="NF006830">
    <property type="entry name" value="PRK09355.1"/>
    <property type="match status" value="1"/>
</dbReference>
<dbReference type="NCBIfam" id="TIGR00694">
    <property type="entry name" value="thiM"/>
    <property type="match status" value="1"/>
</dbReference>
<dbReference type="Pfam" id="PF02110">
    <property type="entry name" value="HK"/>
    <property type="match status" value="1"/>
</dbReference>
<dbReference type="PIRSF" id="PIRSF000513">
    <property type="entry name" value="Thz_kinase"/>
    <property type="match status" value="1"/>
</dbReference>
<dbReference type="PRINTS" id="PR01099">
    <property type="entry name" value="HYETHTZKNASE"/>
</dbReference>
<dbReference type="SUPFAM" id="SSF53613">
    <property type="entry name" value="Ribokinase-like"/>
    <property type="match status" value="1"/>
</dbReference>
<name>THIM_PYRAB</name>
<proteinExistence type="inferred from homology"/>
<evidence type="ECO:0000255" key="1">
    <source>
        <dbReference type="HAMAP-Rule" id="MF_00228"/>
    </source>
</evidence>
<evidence type="ECO:0000305" key="2"/>
<reference key="1">
    <citation type="journal article" date="2003" name="Mol. Microbiol.">
        <title>An integrated analysis of the genome of the hyperthermophilic archaeon Pyrococcus abyssi.</title>
        <authorList>
            <person name="Cohen G.N."/>
            <person name="Barbe V."/>
            <person name="Flament D."/>
            <person name="Galperin M."/>
            <person name="Heilig R."/>
            <person name="Lecompte O."/>
            <person name="Poch O."/>
            <person name="Prieur D."/>
            <person name="Querellou J."/>
            <person name="Ripp R."/>
            <person name="Thierry J.-C."/>
            <person name="Van der Oost J."/>
            <person name="Weissenbach J."/>
            <person name="Zivanovic Y."/>
            <person name="Forterre P."/>
        </authorList>
    </citation>
    <scope>NUCLEOTIDE SEQUENCE [LARGE SCALE GENOMIC DNA]</scope>
    <source>
        <strain>GE5 / Orsay</strain>
    </source>
</reference>
<reference key="2">
    <citation type="journal article" date="2012" name="Curr. Microbiol.">
        <title>Re-annotation of two hyperthermophilic archaea Pyrococcus abyssi GE5 and Pyrococcus furiosus DSM 3638.</title>
        <authorList>
            <person name="Gao J."/>
            <person name="Wang J."/>
        </authorList>
    </citation>
    <scope>GENOME REANNOTATION</scope>
    <source>
        <strain>GE5 / Orsay</strain>
    </source>
</reference>
<gene>
    <name evidence="1" type="primary">thiM</name>
    <name type="ordered locus">PYRAB10910</name>
    <name type="ORF">PAB2432</name>
</gene>
<organism>
    <name type="scientific">Pyrococcus abyssi (strain GE5 / Orsay)</name>
    <dbReference type="NCBI Taxonomy" id="272844"/>
    <lineage>
        <taxon>Archaea</taxon>
        <taxon>Methanobacteriati</taxon>
        <taxon>Methanobacteriota</taxon>
        <taxon>Thermococci</taxon>
        <taxon>Thermococcales</taxon>
        <taxon>Thermococcaceae</taxon>
        <taxon>Pyrococcus</taxon>
    </lineage>
</organism>